<protein>
    <recommendedName>
        <fullName>Zinc finger CCHC domain-containing protein 7</fullName>
    </recommendedName>
    <alternativeName>
        <fullName>TRAMP-like complex RNA-binding factor ZCCHC7</fullName>
    </alternativeName>
</protein>
<dbReference type="EMBL" id="CH473962">
    <property type="protein sequence ID" value="EDL98795.1"/>
    <property type="molecule type" value="Genomic_DNA"/>
</dbReference>
<dbReference type="EMBL" id="BC161967">
    <property type="protein sequence ID" value="AAI61967.1"/>
    <property type="molecule type" value="mRNA"/>
</dbReference>
<dbReference type="RefSeq" id="NP_001100128.1">
    <property type="nucleotide sequence ID" value="NM_001106658.2"/>
</dbReference>
<dbReference type="RefSeq" id="XP_038965389.1">
    <property type="nucleotide sequence ID" value="XM_039109461.2"/>
</dbReference>
<dbReference type="RefSeq" id="XP_038965390.1">
    <property type="nucleotide sequence ID" value="XM_039109462.2"/>
</dbReference>
<dbReference type="FunCoup" id="B1WC15">
    <property type="interactions" value="3127"/>
</dbReference>
<dbReference type="STRING" id="10116.ENSRNOP00000017707"/>
<dbReference type="iPTMnet" id="B1WC15"/>
<dbReference type="PhosphoSitePlus" id="B1WC15"/>
<dbReference type="PaxDb" id="10116-ENSRNOP00000017707"/>
<dbReference type="PeptideAtlas" id="B1WC15"/>
<dbReference type="Ensembl" id="ENSRNOT00000017707.7">
    <property type="protein sequence ID" value="ENSRNOP00000017707.7"/>
    <property type="gene ID" value="ENSRNOG00000013078.7"/>
</dbReference>
<dbReference type="GeneID" id="298086"/>
<dbReference type="KEGG" id="rno:298086"/>
<dbReference type="UCSC" id="RGD:1310467">
    <property type="organism name" value="rat"/>
</dbReference>
<dbReference type="AGR" id="RGD:1310467"/>
<dbReference type="CTD" id="84186"/>
<dbReference type="RGD" id="1310467">
    <property type="gene designation" value="Zcchc7"/>
</dbReference>
<dbReference type="eggNOG" id="KOG4400">
    <property type="taxonomic scope" value="Eukaryota"/>
</dbReference>
<dbReference type="InParanoid" id="B1WC15"/>
<dbReference type="OrthoDB" id="85966at9989"/>
<dbReference type="PhylomeDB" id="B1WC15"/>
<dbReference type="PRO" id="PR:B1WC15"/>
<dbReference type="Proteomes" id="UP000002494">
    <property type="component" value="Chromosome 5"/>
</dbReference>
<dbReference type="Proteomes" id="UP000234681">
    <property type="component" value="Chromosome 5"/>
</dbReference>
<dbReference type="GO" id="GO:0005730">
    <property type="term" value="C:nucleolus"/>
    <property type="evidence" value="ECO:0007669"/>
    <property type="project" value="UniProtKB-SubCell"/>
</dbReference>
<dbReference type="GO" id="GO:0031499">
    <property type="term" value="C:TRAMP complex"/>
    <property type="evidence" value="ECO:0000318"/>
    <property type="project" value="GO_Central"/>
</dbReference>
<dbReference type="GO" id="GO:0003723">
    <property type="term" value="F:RNA binding"/>
    <property type="evidence" value="ECO:0000318"/>
    <property type="project" value="GO_Central"/>
</dbReference>
<dbReference type="GO" id="GO:0008270">
    <property type="term" value="F:zinc ion binding"/>
    <property type="evidence" value="ECO:0007669"/>
    <property type="project" value="UniProtKB-KW"/>
</dbReference>
<dbReference type="GO" id="GO:0071031">
    <property type="term" value="P:nuclear mRNA surveillance of mRNA 3'-end processing"/>
    <property type="evidence" value="ECO:0000318"/>
    <property type="project" value="GO_Central"/>
</dbReference>
<dbReference type="GO" id="GO:0071039">
    <property type="term" value="P:nuclear polyadenylation-dependent CUT catabolic process"/>
    <property type="evidence" value="ECO:0000318"/>
    <property type="project" value="GO_Central"/>
</dbReference>
<dbReference type="GO" id="GO:0071035">
    <property type="term" value="P:nuclear polyadenylation-dependent rRNA catabolic process"/>
    <property type="evidence" value="ECO:0000318"/>
    <property type="project" value="GO_Central"/>
</dbReference>
<dbReference type="GO" id="GO:0071036">
    <property type="term" value="P:nuclear polyadenylation-dependent snoRNA catabolic process"/>
    <property type="evidence" value="ECO:0000318"/>
    <property type="project" value="GO_Central"/>
</dbReference>
<dbReference type="GO" id="GO:0071037">
    <property type="term" value="P:nuclear polyadenylation-dependent snRNA catabolic process"/>
    <property type="evidence" value="ECO:0000318"/>
    <property type="project" value="GO_Central"/>
</dbReference>
<dbReference type="GO" id="GO:0071038">
    <property type="term" value="P:TRAMP-dependent tRNA surveillance pathway"/>
    <property type="evidence" value="ECO:0000318"/>
    <property type="project" value="GO_Central"/>
</dbReference>
<dbReference type="FunFam" id="4.10.60.10:FF:000020">
    <property type="entry name" value="Zinc finger CCHC domain-containing protein 7"/>
    <property type="match status" value="1"/>
</dbReference>
<dbReference type="FunFam" id="4.10.60.10:FF:000041">
    <property type="entry name" value="Zinc finger CCHC domain-containing protein 7"/>
    <property type="match status" value="1"/>
</dbReference>
<dbReference type="Gene3D" id="4.10.60.10">
    <property type="entry name" value="Zinc finger, CCHC-type"/>
    <property type="match status" value="2"/>
</dbReference>
<dbReference type="InterPro" id="IPR051644">
    <property type="entry name" value="TRAMP_AT-DNA-binding"/>
</dbReference>
<dbReference type="InterPro" id="IPR001878">
    <property type="entry name" value="Znf_CCHC"/>
</dbReference>
<dbReference type="InterPro" id="IPR036875">
    <property type="entry name" value="Znf_CCHC_sf"/>
</dbReference>
<dbReference type="PANTHER" id="PTHR46543">
    <property type="entry name" value="ZINC FINGER CCHC DOMAIN-CONTAINING PROTEIN 7"/>
    <property type="match status" value="1"/>
</dbReference>
<dbReference type="PANTHER" id="PTHR46543:SF1">
    <property type="entry name" value="ZINC FINGER CCHC DOMAIN-CONTAINING PROTEIN 7"/>
    <property type="match status" value="1"/>
</dbReference>
<dbReference type="Pfam" id="PF00098">
    <property type="entry name" value="zf-CCHC"/>
    <property type="match status" value="2"/>
</dbReference>
<dbReference type="SMART" id="SM00343">
    <property type="entry name" value="ZnF_C2HC"/>
    <property type="match status" value="4"/>
</dbReference>
<dbReference type="SUPFAM" id="SSF57756">
    <property type="entry name" value="Retrovirus zinc finger-like domains"/>
    <property type="match status" value="1"/>
</dbReference>
<dbReference type="PROSITE" id="PS50158">
    <property type="entry name" value="ZF_CCHC"/>
    <property type="match status" value="2"/>
</dbReference>
<organism>
    <name type="scientific">Rattus norvegicus</name>
    <name type="common">Rat</name>
    <dbReference type="NCBI Taxonomy" id="10116"/>
    <lineage>
        <taxon>Eukaryota</taxon>
        <taxon>Metazoa</taxon>
        <taxon>Chordata</taxon>
        <taxon>Craniata</taxon>
        <taxon>Vertebrata</taxon>
        <taxon>Euteleostomi</taxon>
        <taxon>Mammalia</taxon>
        <taxon>Eutheria</taxon>
        <taxon>Euarchontoglires</taxon>
        <taxon>Glires</taxon>
        <taxon>Rodentia</taxon>
        <taxon>Myomorpha</taxon>
        <taxon>Muroidea</taxon>
        <taxon>Muridae</taxon>
        <taxon>Murinae</taxon>
        <taxon>Rattus</taxon>
    </lineage>
</organism>
<name>ZCHC7_RAT</name>
<comment type="subunit">
    <text evidence="1">Component of a nucleolar TRAMP-like complex, an ATP-dependent exosome regulatory complex consisting of a helicase (MTREX), an oligadenylate polymerase (TENT4B or TENT4A), and a substrate specific RNA-binding factor (ZCCHC7 or ZCCHC8). Several TRAMP-like complexes exist with specific compositions and are associated with nuclear, or nucleolar RNA exosomes (By similarity).</text>
</comment>
<comment type="subcellular location">
    <subcellularLocation>
        <location evidence="1">Nucleus</location>
        <location evidence="1">Nucleolus</location>
    </subcellularLocation>
</comment>
<proteinExistence type="evidence at protein level"/>
<sequence>MFGGFETIEAFEDDLYRDDSSSELSVDSEVEFQLYSQVHYSQNIHNANEEEGYEEKNCESSETVSIQPDQKNLIVLSDSEVIQLSDTSEVITLSDEDSIYRCKRKNIEVQAQEKTQSPATPRSNKVANKCKRSNKKPEPEESPSTIREVMIIEVSSDEEEESTISENENVESWMLLGCEEDDKDNDILLNLVGCKDAGAEGENDVNWFISDKDIEAKIDNNRSSGRWNNRYYSVNKNVTCRNCDKRGHLSKNCPLPQKVRPCCLCSERGHLQYGCPARYCLDCSLPMSSTHRCFERSSWRKRCDRCDMIGHYADACPEIWRQYHLTTKPGPPKKPKTPSGQSALVYCYNCAQKGHYGHECTERRMFNQAFPTSPFIYCYDDKYDIQQRDRRIKRKLKDIKKNGDFPRQFKRPHGEETDRYHHDRRKSRFSGKRSRWPRESKETQKEKTRGREGEKHRRDRQPRDEDEDFPRGLKPNSSSSSNSQKPSKSLHQASHYHRLREEKLRRESMRSKPKKRKFVEDGSHDDLFLIKQRKKKPKSSGF</sequence>
<evidence type="ECO:0000250" key="1"/>
<evidence type="ECO:0000250" key="2">
    <source>
        <dbReference type="UniProtKB" id="Q8N3Z6"/>
    </source>
</evidence>
<evidence type="ECO:0000255" key="3">
    <source>
        <dbReference type="PROSITE-ProRule" id="PRU00047"/>
    </source>
</evidence>
<evidence type="ECO:0000256" key="4">
    <source>
        <dbReference type="SAM" id="MobiDB-lite"/>
    </source>
</evidence>
<evidence type="ECO:0007744" key="5">
    <source>
    </source>
</evidence>
<accession>B1WC15</accession>
<keyword id="KW-1017">Isopeptide bond</keyword>
<keyword id="KW-0479">Metal-binding</keyword>
<keyword id="KW-0539">Nucleus</keyword>
<keyword id="KW-0597">Phosphoprotein</keyword>
<keyword id="KW-1185">Reference proteome</keyword>
<keyword id="KW-0677">Repeat</keyword>
<keyword id="KW-0832">Ubl conjugation</keyword>
<keyword id="KW-0862">Zinc</keyword>
<keyword id="KW-0863">Zinc-finger</keyword>
<gene>
    <name type="primary">Zcchc7</name>
</gene>
<reference key="1">
    <citation type="submission" date="2005-07" db="EMBL/GenBank/DDBJ databases">
        <authorList>
            <person name="Mural R.J."/>
            <person name="Adams M.D."/>
            <person name="Myers E.W."/>
            <person name="Smith H.O."/>
            <person name="Venter J.C."/>
        </authorList>
    </citation>
    <scope>NUCLEOTIDE SEQUENCE [LARGE SCALE GENOMIC DNA]</scope>
    <source>
        <strain>Brown Norway</strain>
    </source>
</reference>
<reference key="2">
    <citation type="journal article" date="2004" name="Genome Res.">
        <title>The status, quality, and expansion of the NIH full-length cDNA project: the Mammalian Gene Collection (MGC).</title>
        <authorList>
            <consortium name="The MGC Project Team"/>
        </authorList>
    </citation>
    <scope>NUCLEOTIDE SEQUENCE [LARGE SCALE MRNA]</scope>
    <source>
        <tissue>Lung</tissue>
    </source>
</reference>
<reference key="3">
    <citation type="journal article" date="2012" name="Nat. Commun.">
        <title>Quantitative maps of protein phosphorylation sites across 14 different rat organs and tissues.</title>
        <authorList>
            <person name="Lundby A."/>
            <person name="Secher A."/>
            <person name="Lage K."/>
            <person name="Nordsborg N.B."/>
            <person name="Dmytriyev A."/>
            <person name="Lundby C."/>
            <person name="Olsen J.V."/>
        </authorList>
    </citation>
    <scope>PHOSPHORYLATION [LARGE SCALE ANALYSIS] AT SER-142</scope>
    <scope>IDENTIFICATION BY MASS SPECTROMETRY [LARGE SCALE ANALYSIS]</scope>
</reference>
<feature type="chain" id="PRO_0000370242" description="Zinc finger CCHC domain-containing protein 7">
    <location>
        <begin position="1"/>
        <end position="542"/>
    </location>
</feature>
<feature type="zinc finger region" description="CCHC-type 1" evidence="3">
    <location>
        <begin position="238"/>
        <end position="255"/>
    </location>
</feature>
<feature type="zinc finger region" description="CCHC-type 2" evidence="3">
    <location>
        <begin position="260"/>
        <end position="277"/>
    </location>
</feature>
<feature type="zinc finger region" description="CCHC-type 3" evidence="3">
    <location>
        <begin position="301"/>
        <end position="318"/>
    </location>
</feature>
<feature type="zinc finger region" description="CCHC-type 4" evidence="3">
    <location>
        <begin position="345"/>
        <end position="362"/>
    </location>
</feature>
<feature type="region of interest" description="Disordered" evidence="4">
    <location>
        <begin position="110"/>
        <end position="144"/>
    </location>
</feature>
<feature type="region of interest" description="Disordered" evidence="4">
    <location>
        <begin position="396"/>
        <end position="542"/>
    </location>
</feature>
<feature type="compositionally biased region" description="Polar residues" evidence="4">
    <location>
        <begin position="112"/>
        <end position="126"/>
    </location>
</feature>
<feature type="compositionally biased region" description="Basic and acidic residues" evidence="4">
    <location>
        <begin position="412"/>
        <end position="421"/>
    </location>
</feature>
<feature type="compositionally biased region" description="Basic residues" evidence="4">
    <location>
        <begin position="422"/>
        <end position="435"/>
    </location>
</feature>
<feature type="compositionally biased region" description="Basic and acidic residues" evidence="4">
    <location>
        <begin position="436"/>
        <end position="456"/>
    </location>
</feature>
<feature type="compositionally biased region" description="Low complexity" evidence="4">
    <location>
        <begin position="474"/>
        <end position="489"/>
    </location>
</feature>
<feature type="compositionally biased region" description="Basic and acidic residues" evidence="4">
    <location>
        <begin position="499"/>
        <end position="510"/>
    </location>
</feature>
<feature type="compositionally biased region" description="Basic and acidic residues" evidence="4">
    <location>
        <begin position="518"/>
        <end position="528"/>
    </location>
</feature>
<feature type="compositionally biased region" description="Basic residues" evidence="4">
    <location>
        <begin position="531"/>
        <end position="542"/>
    </location>
</feature>
<feature type="modified residue" description="Phosphoserine" evidence="5">
    <location>
        <position position="142"/>
    </location>
</feature>
<feature type="modified residue" description="Phosphoserine" evidence="2">
    <location>
        <position position="478"/>
    </location>
</feature>
<feature type="modified residue" description="Phosphoserine" evidence="2">
    <location>
        <position position="480"/>
    </location>
</feature>
<feature type="cross-link" description="Glycyl lysine isopeptide (Lys-Gly) (interchain with G-Cter in SUMO2)" evidence="2">
    <location>
        <position position="129"/>
    </location>
</feature>
<feature type="cross-link" description="Glycyl lysine isopeptide (Lys-Gly) (interchain with G-Cter in SUMO2)" evidence="2">
    <location>
        <position position="136"/>
    </location>
</feature>
<feature type="cross-link" description="Glycyl lysine isopeptide (Lys-Gly) (interchain with G-Cter in SUMO2)" evidence="2">
    <location>
        <position position="236"/>
    </location>
</feature>
<feature type="cross-link" description="Glycyl lysine isopeptide (Lys-Gly) (interchain with G-Cter in SUMO2)" evidence="2">
    <location>
        <position position="251"/>
    </location>
</feature>
<feature type="cross-link" description="Glycyl lysine isopeptide (Lys-Gly) (interchain with G-Cter in SUMO2)" evidence="2">
    <location>
        <position position="336"/>
    </location>
</feature>
<feature type="cross-link" description="Glycyl lysine isopeptide (Lys-Gly) (interchain with G-Cter in SUMO2)" evidence="2">
    <location>
        <position position="410"/>
    </location>
</feature>
<feature type="cross-link" description="Glycyl lysine isopeptide (Lys-Gly) (interchain with G-Cter in SUMO2)" evidence="2">
    <location>
        <position position="432"/>
    </location>
</feature>
<feature type="cross-link" description="Glycyl lysine isopeptide (Lys-Gly) (interchain with G-Cter in SUMO2)" evidence="2">
    <location>
        <position position="474"/>
    </location>
</feature>
<feature type="cross-link" description="Glycyl lysine isopeptide (Lys-Gly) (interchain with G-Cter in SUMO2)" evidence="2">
    <location>
        <position position="485"/>
    </location>
</feature>
<feature type="cross-link" description="Glycyl lysine isopeptide (Lys-Gly) (interchain with G-Cter in SUMO2)" evidence="2">
    <location>
        <position position="488"/>
    </location>
</feature>
<feature type="cross-link" description="Glycyl lysine isopeptide (Lys-Gly) (interchain with G-Cter in SUMO2)" evidence="2">
    <location>
        <position position="531"/>
    </location>
</feature>